<gene>
    <name evidence="1" type="primary">guaA</name>
    <name type="ordered locus">VFMJ11_0652</name>
</gene>
<accession>B5FAY1</accession>
<sequence>MTTNIHDQRILILDFGSQYTQLVARRIREIGVYCELWSWDVEESDIRDFNPDGIILSGGPESVTEENSPRAPQYVFDSGVPVFGVCYGMQTMAEQLGGKVATSTEREFGYAAVQVTGESALFKDLEATQDVWMSHGDKVVEIPSDFVKIAETETCPYAVMANEEKKYYGVQFHPEVTHTKNGMKMLENFVLNVCGCEGLWTSASIIEDAVARIKEQVGDDEVILGLSGGVDSSVVAMLAHRAIGDKLTCVFVDNGLLRLNEADQVMEMFGNKFGLNIIHVNAEQRFLDALEGESDPEVKRKIIGHVFVDIFDEESKKLKNAKWLAQGTIYPDVIESAASKTGKAHVIKSHHNVGGLPDDMEMGLVEPLRELFKDEVRKIGLELGLPYNMLYRHPFPGPGLGVRVLGEIKKEYCDLLRRADAIFIEELHNADLYNKVSQAFTVFLPVRSVGVMGDGRKYDWVVSLRAVETIDFMTAHWAHLPYDFLGKVSNRIINEVNGISRVVYDISGKPPATIEWE</sequence>
<feature type="chain" id="PRO_1000120449" description="GMP synthase [glutamine-hydrolyzing]">
    <location>
        <begin position="1"/>
        <end position="517"/>
    </location>
</feature>
<feature type="domain" description="Glutamine amidotransferase type-1" evidence="1">
    <location>
        <begin position="9"/>
        <end position="199"/>
    </location>
</feature>
<feature type="domain" description="GMPS ATP-PPase" evidence="1">
    <location>
        <begin position="200"/>
        <end position="392"/>
    </location>
</feature>
<feature type="active site" description="Nucleophile" evidence="1">
    <location>
        <position position="86"/>
    </location>
</feature>
<feature type="active site" evidence="1">
    <location>
        <position position="173"/>
    </location>
</feature>
<feature type="active site" evidence="1">
    <location>
        <position position="175"/>
    </location>
</feature>
<feature type="binding site" evidence="1">
    <location>
        <begin position="227"/>
        <end position="233"/>
    </location>
    <ligand>
        <name>ATP</name>
        <dbReference type="ChEBI" id="CHEBI:30616"/>
    </ligand>
</feature>
<name>GUAA_ALIFM</name>
<comment type="function">
    <text evidence="1">Catalyzes the synthesis of GMP from XMP.</text>
</comment>
<comment type="catalytic activity">
    <reaction evidence="1">
        <text>XMP + L-glutamine + ATP + H2O = GMP + L-glutamate + AMP + diphosphate + 2 H(+)</text>
        <dbReference type="Rhea" id="RHEA:11680"/>
        <dbReference type="ChEBI" id="CHEBI:15377"/>
        <dbReference type="ChEBI" id="CHEBI:15378"/>
        <dbReference type="ChEBI" id="CHEBI:29985"/>
        <dbReference type="ChEBI" id="CHEBI:30616"/>
        <dbReference type="ChEBI" id="CHEBI:33019"/>
        <dbReference type="ChEBI" id="CHEBI:57464"/>
        <dbReference type="ChEBI" id="CHEBI:58115"/>
        <dbReference type="ChEBI" id="CHEBI:58359"/>
        <dbReference type="ChEBI" id="CHEBI:456215"/>
        <dbReference type="EC" id="6.3.5.2"/>
    </reaction>
</comment>
<comment type="pathway">
    <text evidence="1">Purine metabolism; GMP biosynthesis; GMP from XMP (L-Gln route): step 1/1.</text>
</comment>
<comment type="subunit">
    <text evidence="1">Homodimer.</text>
</comment>
<dbReference type="EC" id="6.3.5.2" evidence="1"/>
<dbReference type="EMBL" id="CP001139">
    <property type="protein sequence ID" value="ACH65267.1"/>
    <property type="molecule type" value="Genomic_DNA"/>
</dbReference>
<dbReference type="RefSeq" id="WP_012532935.1">
    <property type="nucleotide sequence ID" value="NC_011184.1"/>
</dbReference>
<dbReference type="SMR" id="B5FAY1"/>
<dbReference type="MEROPS" id="C26.957"/>
<dbReference type="KEGG" id="vfm:VFMJ11_0652"/>
<dbReference type="HOGENOM" id="CLU_014340_0_5_6"/>
<dbReference type="UniPathway" id="UPA00189">
    <property type="reaction ID" value="UER00296"/>
</dbReference>
<dbReference type="Proteomes" id="UP000001857">
    <property type="component" value="Chromosome I"/>
</dbReference>
<dbReference type="GO" id="GO:0005829">
    <property type="term" value="C:cytosol"/>
    <property type="evidence" value="ECO:0007669"/>
    <property type="project" value="TreeGrafter"/>
</dbReference>
<dbReference type="GO" id="GO:0005524">
    <property type="term" value="F:ATP binding"/>
    <property type="evidence" value="ECO:0007669"/>
    <property type="project" value="UniProtKB-UniRule"/>
</dbReference>
<dbReference type="GO" id="GO:0003921">
    <property type="term" value="F:GMP synthase activity"/>
    <property type="evidence" value="ECO:0007669"/>
    <property type="project" value="InterPro"/>
</dbReference>
<dbReference type="CDD" id="cd01742">
    <property type="entry name" value="GATase1_GMP_Synthase"/>
    <property type="match status" value="1"/>
</dbReference>
<dbReference type="CDD" id="cd01997">
    <property type="entry name" value="GMP_synthase_C"/>
    <property type="match status" value="1"/>
</dbReference>
<dbReference type="FunFam" id="3.30.300.10:FF:000002">
    <property type="entry name" value="GMP synthase [glutamine-hydrolyzing]"/>
    <property type="match status" value="1"/>
</dbReference>
<dbReference type="FunFam" id="3.40.50.620:FF:000001">
    <property type="entry name" value="GMP synthase [glutamine-hydrolyzing]"/>
    <property type="match status" value="1"/>
</dbReference>
<dbReference type="FunFam" id="3.40.50.880:FF:000001">
    <property type="entry name" value="GMP synthase [glutamine-hydrolyzing]"/>
    <property type="match status" value="1"/>
</dbReference>
<dbReference type="Gene3D" id="3.30.300.10">
    <property type="match status" value="1"/>
</dbReference>
<dbReference type="Gene3D" id="3.40.50.880">
    <property type="match status" value="1"/>
</dbReference>
<dbReference type="Gene3D" id="3.40.50.620">
    <property type="entry name" value="HUPs"/>
    <property type="match status" value="1"/>
</dbReference>
<dbReference type="HAMAP" id="MF_00344">
    <property type="entry name" value="GMP_synthase"/>
    <property type="match status" value="1"/>
</dbReference>
<dbReference type="InterPro" id="IPR029062">
    <property type="entry name" value="Class_I_gatase-like"/>
</dbReference>
<dbReference type="InterPro" id="IPR017926">
    <property type="entry name" value="GATASE"/>
</dbReference>
<dbReference type="InterPro" id="IPR001674">
    <property type="entry name" value="GMP_synth_C"/>
</dbReference>
<dbReference type="InterPro" id="IPR004739">
    <property type="entry name" value="GMP_synth_GATase"/>
</dbReference>
<dbReference type="InterPro" id="IPR022955">
    <property type="entry name" value="GMP_synthase"/>
</dbReference>
<dbReference type="InterPro" id="IPR025777">
    <property type="entry name" value="GMPS_ATP_PPase_dom"/>
</dbReference>
<dbReference type="InterPro" id="IPR022310">
    <property type="entry name" value="NAD/GMP_synthase"/>
</dbReference>
<dbReference type="InterPro" id="IPR014729">
    <property type="entry name" value="Rossmann-like_a/b/a_fold"/>
</dbReference>
<dbReference type="NCBIfam" id="TIGR00884">
    <property type="entry name" value="guaA_Cterm"/>
    <property type="match status" value="1"/>
</dbReference>
<dbReference type="NCBIfam" id="TIGR00888">
    <property type="entry name" value="guaA_Nterm"/>
    <property type="match status" value="1"/>
</dbReference>
<dbReference type="NCBIfam" id="NF000848">
    <property type="entry name" value="PRK00074.1"/>
    <property type="match status" value="1"/>
</dbReference>
<dbReference type="PANTHER" id="PTHR11922:SF2">
    <property type="entry name" value="GMP SYNTHASE [GLUTAMINE-HYDROLYZING]"/>
    <property type="match status" value="1"/>
</dbReference>
<dbReference type="PANTHER" id="PTHR11922">
    <property type="entry name" value="GMP SYNTHASE-RELATED"/>
    <property type="match status" value="1"/>
</dbReference>
<dbReference type="Pfam" id="PF00117">
    <property type="entry name" value="GATase"/>
    <property type="match status" value="1"/>
</dbReference>
<dbReference type="Pfam" id="PF00958">
    <property type="entry name" value="GMP_synt_C"/>
    <property type="match status" value="1"/>
</dbReference>
<dbReference type="Pfam" id="PF02540">
    <property type="entry name" value="NAD_synthase"/>
    <property type="match status" value="1"/>
</dbReference>
<dbReference type="PRINTS" id="PR00097">
    <property type="entry name" value="ANTSNTHASEII"/>
</dbReference>
<dbReference type="PRINTS" id="PR00099">
    <property type="entry name" value="CPSGATASE"/>
</dbReference>
<dbReference type="PRINTS" id="PR00096">
    <property type="entry name" value="GATASE"/>
</dbReference>
<dbReference type="SUPFAM" id="SSF52402">
    <property type="entry name" value="Adenine nucleotide alpha hydrolases-like"/>
    <property type="match status" value="1"/>
</dbReference>
<dbReference type="SUPFAM" id="SSF52317">
    <property type="entry name" value="Class I glutamine amidotransferase-like"/>
    <property type="match status" value="1"/>
</dbReference>
<dbReference type="SUPFAM" id="SSF54810">
    <property type="entry name" value="GMP synthetase C-terminal dimerisation domain"/>
    <property type="match status" value="1"/>
</dbReference>
<dbReference type="PROSITE" id="PS51273">
    <property type="entry name" value="GATASE_TYPE_1"/>
    <property type="match status" value="1"/>
</dbReference>
<dbReference type="PROSITE" id="PS51553">
    <property type="entry name" value="GMPS_ATP_PPASE"/>
    <property type="match status" value="1"/>
</dbReference>
<reference key="1">
    <citation type="submission" date="2008-08" db="EMBL/GenBank/DDBJ databases">
        <title>Complete sequence of Vibrio fischeri strain MJ11.</title>
        <authorList>
            <person name="Mandel M.J."/>
            <person name="Stabb E.V."/>
            <person name="Ruby E.G."/>
            <person name="Ferriera S."/>
            <person name="Johnson J."/>
            <person name="Kravitz S."/>
            <person name="Beeson K."/>
            <person name="Sutton G."/>
            <person name="Rogers Y.-H."/>
            <person name="Friedman R."/>
            <person name="Frazier M."/>
            <person name="Venter J.C."/>
        </authorList>
    </citation>
    <scope>NUCLEOTIDE SEQUENCE [LARGE SCALE GENOMIC DNA]</scope>
    <source>
        <strain>MJ11</strain>
    </source>
</reference>
<organism>
    <name type="scientific">Aliivibrio fischeri (strain MJ11)</name>
    <name type="common">Vibrio fischeri</name>
    <dbReference type="NCBI Taxonomy" id="388396"/>
    <lineage>
        <taxon>Bacteria</taxon>
        <taxon>Pseudomonadati</taxon>
        <taxon>Pseudomonadota</taxon>
        <taxon>Gammaproteobacteria</taxon>
        <taxon>Vibrionales</taxon>
        <taxon>Vibrionaceae</taxon>
        <taxon>Aliivibrio</taxon>
    </lineage>
</organism>
<proteinExistence type="inferred from homology"/>
<evidence type="ECO:0000255" key="1">
    <source>
        <dbReference type="HAMAP-Rule" id="MF_00344"/>
    </source>
</evidence>
<protein>
    <recommendedName>
        <fullName evidence="1">GMP synthase [glutamine-hydrolyzing]</fullName>
        <ecNumber evidence="1">6.3.5.2</ecNumber>
    </recommendedName>
    <alternativeName>
        <fullName evidence="1">GMP synthetase</fullName>
    </alternativeName>
    <alternativeName>
        <fullName evidence="1">Glutamine amidotransferase</fullName>
    </alternativeName>
</protein>
<keyword id="KW-0067">ATP-binding</keyword>
<keyword id="KW-0315">Glutamine amidotransferase</keyword>
<keyword id="KW-0332">GMP biosynthesis</keyword>
<keyword id="KW-0436">Ligase</keyword>
<keyword id="KW-0547">Nucleotide-binding</keyword>
<keyword id="KW-0658">Purine biosynthesis</keyword>